<proteinExistence type="evidence at protein level"/>
<sequence>MAESSAATQSPSVSSSSSGAEPSTLGGGGGSPGACPALGAKSCGSSCAVGLSSLCSDEPPSKIMTSSFLSSSEIYNPDPTTPLGSETLGSHLVAKDGKDPLVLLDKKTLDSPQGTNKDRVDTPVSLAADIPCSHPSIPDSFPEQPTFLSKETDPTEEWVVKNQEPKNPSEVPSGEDRSALDLGQRKAEHICTHSLSPSEPAVASVEKDSPESPFEVIIDKATFDREFKDLYKESTDDLGGWAAHGDRESPADLLEMNDKVFPLRNKEAGRYPSSALLGRQFSHTTAALEEVSRCVNDMHNFTNEILTWDLDPQAKQQADKSPCTTESTGLDRSEHRSEIPVINLKTSPQQKMPVCSFNGSTPITRSTGDWTETFTEGKPVKGYLSSTKEAGGKGVPDSSQPISGSGAATVEVTLPDLRGTWPNSVLGEVTEVDSSGESDDTVIEDTTENPSVKNNKVLPEKSDSLPSAAVKTSERENKETTSHETVRSEMYENSEQQQAHAETPTQRSLEGQMSPQVPNMLNEVIPENLAMTDTTRVCSAAPPSVLSETGFSLTVPASAKSESLLGKNVEDTDGSSPEDLMAALTGTEEKGTVDKEKGDVLEAVLEKIANVKNTLPVELLHENKLSSSETKNTKSKYSEHSRETNGGAPKVSSDLEQEQLTIRAIKELGAKQVQAERMSPGGKLKRTFDPQSGPQNSSDILEHTDITTGSDLGIPKKPTIIKDTRIDSISSLTKTETVNKHVLARLLSDFPVHDLIFWRDVKKTGFVFGTTLIMLLSLAAFSVISVVSYLILALLSVTISFRVYKSVIQAVQKSEEGHPFKAYLDVDITLSSEAFHSYMNAAMVHVNKALKLIIRLFLVEDLVDSLKLAVFMWLMTYVGAVFNGITLLILAELLVFSVPIVYEKYKTQIDHYVGIARDQTKSIVEKIQAKLPGIAKKKAE</sequence>
<reference key="1">
    <citation type="journal article" date="2003" name="FASEB J.">
        <title>A reticular rhapsody: phylogenic evolution and nomenclature of the RTN/Nogo gene family.</title>
        <authorList>
            <person name="Oertle T."/>
            <person name="Klinger M."/>
            <person name="Stuermer C.A.O."/>
            <person name="Schwab M.E."/>
        </authorList>
    </citation>
    <scope>NUCLEOTIDE SEQUENCE [MRNA] (ISOFORM 2)</scope>
</reference>
<reference key="2">
    <citation type="journal article" date="2005" name="Brain Res. Mol. Brain Res.">
        <title>Identification of a new RTN3 transcript, RTN3-A1, and its distribution in adult mouse brain.</title>
        <authorList>
            <person name="Cai Y."/>
            <person name="Saiyin H."/>
            <person name="Lin Q."/>
            <person name="Zhang P."/>
            <person name="Tang L."/>
            <person name="Pan X."/>
            <person name="Yu L."/>
        </authorList>
    </citation>
    <scope>NUCLEOTIDE SEQUENCE [MRNA] (ISOFORM 1)</scope>
</reference>
<reference key="3">
    <citation type="submission" date="2001-11" db="EMBL/GenBank/DDBJ databases">
        <title>A neuron-specific gene, reticulon 3, is upregulated in satellite cells of rat dorsal root ganglion after peripheral axotomy.</title>
        <authorList>
            <person name="Gong J.-Y."/>
            <person name="Zhang X."/>
        </authorList>
    </citation>
    <scope>NUCLEOTIDE SEQUENCE [MRNA] (ISOFORM 2)</scope>
</reference>
<reference key="4">
    <citation type="journal article" date="2004" name="Genome Res.">
        <title>The status, quality, and expansion of the NIH full-length cDNA project: the Mammalian Gene Collection (MGC).</title>
        <authorList>
            <consortium name="The MGC Project Team"/>
        </authorList>
    </citation>
    <scope>NUCLEOTIDE SEQUENCE [LARGE SCALE MRNA] (ISOFORM 2)</scope>
    <source>
        <tissue>Liver</tissue>
        <tissue>Prostate</tissue>
    </source>
</reference>
<reference key="5">
    <citation type="journal article" date="2004" name="Neurosci. Lett.">
        <title>Reticulon3 expression in rat optic and olfactory systems.</title>
        <authorList>
            <person name="Kumamaru E."/>
            <person name="Kuo C.-H."/>
            <person name="Fujimoto T."/>
            <person name="Kohama K."/>
            <person name="Zeng L.-H."/>
            <person name="Taira E."/>
            <person name="Tanaka H."/>
            <person name="Toyoda T."/>
            <person name="Miki N."/>
        </authorList>
    </citation>
    <scope>TISSUE SPECIFICITY</scope>
    <scope>DEVELOPMENTAL STAGE</scope>
</reference>
<reference key="6">
    <citation type="journal article" date="2009" name="Cell">
        <title>A class of dynamin-like GTPases involved in the generation of the tubular ER network.</title>
        <authorList>
            <person name="Hu J."/>
            <person name="Shibata Y."/>
            <person name="Zhu P.-P."/>
            <person name="Voss C."/>
            <person name="Rismanchi N."/>
            <person name="Prinz W.A."/>
            <person name="Rapoport T.A."/>
            <person name="Blackstone C."/>
        </authorList>
    </citation>
    <scope>INTERACTION WITH ATL1</scope>
</reference>
<reference key="7">
    <citation type="journal article" date="2012" name="Nat. Commun.">
        <title>Quantitative maps of protein phosphorylation sites across 14 different rat organs and tissues.</title>
        <authorList>
            <person name="Lundby A."/>
            <person name="Secher A."/>
            <person name="Lage K."/>
            <person name="Nordsborg N.B."/>
            <person name="Dmytriyev A."/>
            <person name="Lundby C."/>
            <person name="Olsen J.V."/>
        </authorList>
    </citation>
    <scope>PHOSPHORYLATION [LARGE SCALE ANALYSIS] AT SER-31; SER-209; SER-212; SER-249; THR-572; SER-575 AND SER-576</scope>
    <scope>IDENTIFICATION BY MASS SPECTROMETRY [LARGE SCALE ANALYSIS]</scope>
</reference>
<accession>Q6RJR6</accession>
<accession>Q6P6R3</accession>
<accession>Q8VBU0</accession>
<name>RTN3_RAT</name>
<protein>
    <recommendedName>
        <fullName>Reticulon-3</fullName>
    </recommendedName>
</protein>
<dbReference type="EMBL" id="AY164698">
    <property type="protein sequence ID" value="AAP47276.1"/>
    <property type="molecule type" value="mRNA"/>
</dbReference>
<dbReference type="EMBL" id="AY496443">
    <property type="protein sequence ID" value="AAR89918.1"/>
    <property type="molecule type" value="mRNA"/>
</dbReference>
<dbReference type="EMBL" id="AF442357">
    <property type="protein sequence ID" value="AAL35353.1"/>
    <property type="molecule type" value="mRNA"/>
</dbReference>
<dbReference type="EMBL" id="AF442358">
    <property type="protein sequence ID" value="AAL35354.1"/>
    <property type="molecule type" value="mRNA"/>
</dbReference>
<dbReference type="EMBL" id="BC062068">
    <property type="protein sequence ID" value="AAH62068.1"/>
    <property type="molecule type" value="mRNA"/>
</dbReference>
<dbReference type="EMBL" id="BC107448">
    <property type="protein sequence ID" value="AAI07449.1"/>
    <property type="molecule type" value="mRNA"/>
</dbReference>
<dbReference type="RefSeq" id="NP_001009953.2">
    <molecule id="Q6RJR6-2"/>
    <property type="nucleotide sequence ID" value="NM_001009953.3"/>
</dbReference>
<dbReference type="RefSeq" id="NP_543185.2">
    <molecule id="Q6RJR6-1"/>
    <property type="nucleotide sequence ID" value="NM_080909.3"/>
</dbReference>
<dbReference type="SMR" id="Q6RJR6"/>
<dbReference type="BioGRID" id="250879">
    <property type="interactions" value="1"/>
</dbReference>
<dbReference type="FunCoup" id="Q6RJR6">
    <property type="interactions" value="746"/>
</dbReference>
<dbReference type="IntAct" id="Q6RJR6">
    <property type="interactions" value="2"/>
</dbReference>
<dbReference type="MINT" id="Q6RJR6"/>
<dbReference type="STRING" id="10116.ENSRNOP00000028785"/>
<dbReference type="iPTMnet" id="Q6RJR6"/>
<dbReference type="PhosphoSitePlus" id="Q6RJR6"/>
<dbReference type="SwissPalm" id="Q6RJR6"/>
<dbReference type="jPOST" id="Q6RJR6"/>
<dbReference type="PaxDb" id="10116-ENSRNOP00000028785"/>
<dbReference type="Ensembl" id="ENSRNOT00000028785.8">
    <molecule id="Q6RJR6-1"/>
    <property type="protein sequence ID" value="ENSRNOP00000028785.5"/>
    <property type="gene ID" value="ENSRNOG00000021202.9"/>
</dbReference>
<dbReference type="GeneID" id="140945"/>
<dbReference type="KEGG" id="rno:140945"/>
<dbReference type="UCSC" id="RGD:620988">
    <molecule id="Q6RJR6-1"/>
    <property type="organism name" value="rat"/>
</dbReference>
<dbReference type="AGR" id="RGD:620988"/>
<dbReference type="CTD" id="10313"/>
<dbReference type="RGD" id="620988">
    <property type="gene designation" value="Rtn3"/>
</dbReference>
<dbReference type="eggNOG" id="KOG1792">
    <property type="taxonomic scope" value="Eukaryota"/>
</dbReference>
<dbReference type="GeneTree" id="ENSGT00940000157482"/>
<dbReference type="HOGENOM" id="CLU_011704_0_0_1"/>
<dbReference type="InParanoid" id="Q6RJR6"/>
<dbReference type="OrthoDB" id="567788at2759"/>
<dbReference type="PhylomeDB" id="Q6RJR6"/>
<dbReference type="Reactome" id="R-RNO-8849932">
    <property type="pathway name" value="Synaptic adhesion-like molecules"/>
</dbReference>
<dbReference type="PRO" id="PR:Q6RJR6"/>
<dbReference type="Proteomes" id="UP000002494">
    <property type="component" value="Chromosome 1"/>
</dbReference>
<dbReference type="Bgee" id="ENSRNOG00000021202">
    <property type="expression patterns" value="Expressed in frontal cortex and 20 other cell types or tissues"/>
</dbReference>
<dbReference type="ExpressionAtlas" id="Q6RJR6">
    <property type="expression patterns" value="baseline and differential"/>
</dbReference>
<dbReference type="GO" id="GO:0005783">
    <property type="term" value="C:endoplasmic reticulum"/>
    <property type="evidence" value="ECO:0000250"/>
    <property type="project" value="UniProtKB"/>
</dbReference>
<dbReference type="GO" id="GO:0005789">
    <property type="term" value="C:endoplasmic reticulum membrane"/>
    <property type="evidence" value="ECO:0000266"/>
    <property type="project" value="RGD"/>
</dbReference>
<dbReference type="GO" id="GO:0098978">
    <property type="term" value="C:glutamatergic synapse"/>
    <property type="evidence" value="ECO:0000314"/>
    <property type="project" value="SynGO"/>
</dbReference>
<dbReference type="GO" id="GO:0005794">
    <property type="term" value="C:Golgi apparatus"/>
    <property type="evidence" value="ECO:0000250"/>
    <property type="project" value="UniProtKB"/>
</dbReference>
<dbReference type="GO" id="GO:0000139">
    <property type="term" value="C:Golgi membrane"/>
    <property type="evidence" value="ECO:0007669"/>
    <property type="project" value="UniProtKB-SubCell"/>
</dbReference>
<dbReference type="GO" id="GO:0043005">
    <property type="term" value="C:neuron projection"/>
    <property type="evidence" value="ECO:0000318"/>
    <property type="project" value="GO_Central"/>
</dbReference>
<dbReference type="GO" id="GO:0014069">
    <property type="term" value="C:postsynaptic density"/>
    <property type="evidence" value="ECO:0000318"/>
    <property type="project" value="GO_Central"/>
</dbReference>
<dbReference type="GO" id="GO:0098793">
    <property type="term" value="C:presynapse"/>
    <property type="evidence" value="ECO:0000314"/>
    <property type="project" value="SynGO"/>
</dbReference>
<dbReference type="GO" id="GO:0045202">
    <property type="term" value="C:synapse"/>
    <property type="evidence" value="ECO:0000266"/>
    <property type="project" value="RGD"/>
</dbReference>
<dbReference type="GO" id="GO:0006915">
    <property type="term" value="P:apoptotic process"/>
    <property type="evidence" value="ECO:0007669"/>
    <property type="project" value="UniProtKB-KW"/>
</dbReference>
<dbReference type="GO" id="GO:0007420">
    <property type="term" value="P:brain development"/>
    <property type="evidence" value="ECO:0000318"/>
    <property type="project" value="GO_Central"/>
</dbReference>
<dbReference type="GO" id="GO:0071787">
    <property type="term" value="P:endoplasmic reticulum tubular network formation"/>
    <property type="evidence" value="ECO:0000266"/>
    <property type="project" value="RGD"/>
</dbReference>
<dbReference type="GO" id="GO:0071786">
    <property type="term" value="P:endoplasmic reticulum tubular network organization"/>
    <property type="evidence" value="ECO:0000266"/>
    <property type="project" value="RGD"/>
</dbReference>
<dbReference type="GO" id="GO:1902430">
    <property type="term" value="P:negative regulation of amyloid-beta formation"/>
    <property type="evidence" value="ECO:0000250"/>
    <property type="project" value="UniProtKB"/>
</dbReference>
<dbReference type="GO" id="GO:0030182">
    <property type="term" value="P:neuron differentiation"/>
    <property type="evidence" value="ECO:0000318"/>
    <property type="project" value="GO_Central"/>
</dbReference>
<dbReference type="GO" id="GO:0016192">
    <property type="term" value="P:vesicle-mediated transport"/>
    <property type="evidence" value="ECO:0007669"/>
    <property type="project" value="UniProtKB-KW"/>
</dbReference>
<dbReference type="FunFam" id="1.20.5.2480:FF:000001">
    <property type="entry name" value="Reticulon"/>
    <property type="match status" value="1"/>
</dbReference>
<dbReference type="Gene3D" id="1.20.5.2480">
    <property type="match status" value="1"/>
</dbReference>
<dbReference type="InterPro" id="IPR003388">
    <property type="entry name" value="Reticulon"/>
</dbReference>
<dbReference type="InterPro" id="IPR046964">
    <property type="entry name" value="RTN1-4"/>
</dbReference>
<dbReference type="PANTHER" id="PTHR45799:SF4">
    <property type="entry name" value="RETICULON-3"/>
    <property type="match status" value="1"/>
</dbReference>
<dbReference type="PANTHER" id="PTHR45799">
    <property type="entry name" value="RETICULON-LIKE PROTEIN"/>
    <property type="match status" value="1"/>
</dbReference>
<dbReference type="Pfam" id="PF02453">
    <property type="entry name" value="Reticulon"/>
    <property type="match status" value="1"/>
</dbReference>
<dbReference type="PROSITE" id="PS50845">
    <property type="entry name" value="RETICULON"/>
    <property type="match status" value="1"/>
</dbReference>
<comment type="function">
    <text evidence="2">May be involved in membrane trafficking in the early secretory pathway. Inhibits BACE1 activity and amyloid precursor protein processing. May induce caspase-8 cascade and apoptosis. May favor BCL2 translocation to the mitochondria upon endoplasmic reticulum stress. Induces the formation of endoplasmic reticulum tubules. Acts also as an inflammation-resolving regulator by interacting with both TRIM25 and RIGI, subsequently impairing RIGI 'Lys-63'-linked polyubiquitination leading to IRF3 and NF-kappa-B inhibition.</text>
</comment>
<comment type="subunit">
    <text evidence="2 3 8">Homodimer. Interacts with RTN4. Isoform 2 interacts with BACE1, BACE2, BCL2 and FADD. Interacts with ATL2. Interacts with TMEM33 (By similarity). Interacts with ATL1 (PubMed:19665976). Interacts with ZFYVE27 and with KIF5A in a ZFYVE27-dependent manner (By similarity). Interacts with RIGI. Interacts with TRIM25 (By similarity).</text>
</comment>
<comment type="subcellular location">
    <subcellularLocation>
        <location evidence="2">Endoplasmic reticulum membrane</location>
        <topology evidence="4">Multi-pass membrane protein</topology>
    </subcellularLocation>
    <subcellularLocation>
        <location evidence="2">Golgi apparatus membrane</location>
        <topology evidence="4">Multi-pass membrane protein</topology>
    </subcellularLocation>
</comment>
<comment type="alternative products">
    <event type="alternative splicing"/>
    <isoform>
        <id>Q6RJR6-1</id>
        <name>1</name>
        <sequence type="displayed"/>
    </isoform>
    <isoform>
        <id>Q6RJR6-2</id>
        <name>2</name>
        <sequence type="described" ref="VSP_023771"/>
    </isoform>
</comment>
<comment type="tissue specificity">
    <text evidence="7">Present in olfactory bulb, olfactory epithelium and retina (at protein level).</text>
</comment>
<comment type="developmental stage">
    <text evidence="7">In the optic nerve, expressed more abundantly in the embryo than in the adult.</text>
</comment>
<gene>
    <name type="primary">Rtn3</name>
</gene>
<organism>
    <name type="scientific">Rattus norvegicus</name>
    <name type="common">Rat</name>
    <dbReference type="NCBI Taxonomy" id="10116"/>
    <lineage>
        <taxon>Eukaryota</taxon>
        <taxon>Metazoa</taxon>
        <taxon>Chordata</taxon>
        <taxon>Craniata</taxon>
        <taxon>Vertebrata</taxon>
        <taxon>Euteleostomi</taxon>
        <taxon>Mammalia</taxon>
        <taxon>Eutheria</taxon>
        <taxon>Euarchontoglires</taxon>
        <taxon>Glires</taxon>
        <taxon>Rodentia</taxon>
        <taxon>Myomorpha</taxon>
        <taxon>Muroidea</taxon>
        <taxon>Muridae</taxon>
        <taxon>Murinae</taxon>
        <taxon>Rattus</taxon>
    </lineage>
</organism>
<evidence type="ECO:0000250" key="1"/>
<evidence type="ECO:0000250" key="2">
    <source>
        <dbReference type="UniProtKB" id="O95197"/>
    </source>
</evidence>
<evidence type="ECO:0000250" key="3">
    <source>
        <dbReference type="UniProtKB" id="Q9ES97"/>
    </source>
</evidence>
<evidence type="ECO:0000255" key="4"/>
<evidence type="ECO:0000255" key="5">
    <source>
        <dbReference type="PROSITE-ProRule" id="PRU00170"/>
    </source>
</evidence>
<evidence type="ECO:0000256" key="6">
    <source>
        <dbReference type="SAM" id="MobiDB-lite"/>
    </source>
</evidence>
<evidence type="ECO:0000269" key="7">
    <source>
    </source>
</evidence>
<evidence type="ECO:0000269" key="8">
    <source>
    </source>
</evidence>
<evidence type="ECO:0000303" key="9">
    <source>
    </source>
</evidence>
<evidence type="ECO:0000303" key="10">
    <source>
    </source>
</evidence>
<evidence type="ECO:0000303" key="11">
    <source ref="3"/>
</evidence>
<evidence type="ECO:0000305" key="12"/>
<evidence type="ECO:0007744" key="13">
    <source>
    </source>
</evidence>
<keyword id="KW-0007">Acetylation</keyword>
<keyword id="KW-0025">Alternative splicing</keyword>
<keyword id="KW-0053">Apoptosis</keyword>
<keyword id="KW-0256">Endoplasmic reticulum</keyword>
<keyword id="KW-0931">ER-Golgi transport</keyword>
<keyword id="KW-0333">Golgi apparatus</keyword>
<keyword id="KW-0472">Membrane</keyword>
<keyword id="KW-0597">Phosphoprotein</keyword>
<keyword id="KW-1185">Reference proteome</keyword>
<keyword id="KW-0812">Transmembrane</keyword>
<keyword id="KW-1133">Transmembrane helix</keyword>
<keyword id="KW-0813">Transport</keyword>
<feature type="initiator methionine" description="Removed" evidence="2">
    <location>
        <position position="1"/>
    </location>
</feature>
<feature type="chain" id="PRO_0000280541" description="Reticulon-3">
    <location>
        <begin position="2"/>
        <end position="940"/>
    </location>
</feature>
<feature type="topological domain" description="Cytoplasmic" evidence="4">
    <location>
        <begin position="2"/>
        <end position="771"/>
    </location>
</feature>
<feature type="intramembrane region" description="Helical" evidence="4">
    <location>
        <begin position="772"/>
        <end position="795"/>
    </location>
</feature>
<feature type="topological domain" description="Cytoplasmic" evidence="4">
    <location>
        <begin position="796"/>
        <end position="852"/>
    </location>
</feature>
<feature type="intramembrane region" description="Helical" evidence="4">
    <location>
        <begin position="853"/>
        <end position="875"/>
    </location>
</feature>
<feature type="topological domain" description="Cytoplasmic" evidence="4">
    <location>
        <begin position="876"/>
        <end position="879"/>
    </location>
</feature>
<feature type="intramembrane region" description="Helical" evidence="4">
    <location>
        <begin position="880"/>
        <end position="902"/>
    </location>
</feature>
<feature type="topological domain" description="Cytoplasmic" evidence="4">
    <location>
        <begin position="903"/>
        <end position="940"/>
    </location>
</feature>
<feature type="domain" description="Reticulon" evidence="5">
    <location>
        <begin position="752"/>
        <end position="940"/>
    </location>
</feature>
<feature type="region of interest" description="Disordered" evidence="6">
    <location>
        <begin position="1"/>
        <end position="32"/>
    </location>
</feature>
<feature type="region of interest" description="Disordered" evidence="6">
    <location>
        <begin position="71"/>
        <end position="91"/>
    </location>
</feature>
<feature type="region of interest" description="Disordered" evidence="6">
    <location>
        <begin position="129"/>
        <end position="182"/>
    </location>
</feature>
<feature type="region of interest" description="Disordered" evidence="6">
    <location>
        <begin position="314"/>
        <end position="335"/>
    </location>
</feature>
<feature type="region of interest" description="Disordered" evidence="6">
    <location>
        <begin position="381"/>
        <end position="405"/>
    </location>
</feature>
<feature type="region of interest" description="Disordered" evidence="6">
    <location>
        <begin position="428"/>
        <end position="512"/>
    </location>
</feature>
<feature type="region of interest" description="Disordered" evidence="6">
    <location>
        <begin position="623"/>
        <end position="655"/>
    </location>
</feature>
<feature type="region of interest" description="Disordered" evidence="6">
    <location>
        <begin position="672"/>
        <end position="701"/>
    </location>
</feature>
<feature type="region of interest" description="Interaction with FADD" evidence="1">
    <location>
        <begin position="895"/>
        <end position="940"/>
    </location>
</feature>
<feature type="region of interest" description="Interaction with BACE1" evidence="1">
    <location>
        <begin position="908"/>
        <end position="910"/>
    </location>
</feature>
<feature type="compositionally biased region" description="Low complexity" evidence="6">
    <location>
        <begin position="1"/>
        <end position="24"/>
    </location>
</feature>
<feature type="compositionally biased region" description="Acidic residues" evidence="6">
    <location>
        <begin position="430"/>
        <end position="447"/>
    </location>
</feature>
<feature type="compositionally biased region" description="Basic and acidic residues" evidence="6">
    <location>
        <begin position="472"/>
        <end position="490"/>
    </location>
</feature>
<feature type="compositionally biased region" description="Polar residues" evidence="6">
    <location>
        <begin position="491"/>
        <end position="512"/>
    </location>
</feature>
<feature type="compositionally biased region" description="Polar residues" evidence="6">
    <location>
        <begin position="689"/>
        <end position="699"/>
    </location>
</feature>
<feature type="modified residue" description="N-acetylalanine" evidence="2">
    <location>
        <position position="2"/>
    </location>
</feature>
<feature type="modified residue" description="Phosphoserine" evidence="13">
    <location>
        <position position="31"/>
    </location>
</feature>
<feature type="modified residue" description="Phosphoserine" evidence="2">
    <location>
        <position position="196"/>
    </location>
</feature>
<feature type="modified residue" description="Phosphoserine" evidence="3">
    <location>
        <position position="204"/>
    </location>
</feature>
<feature type="modified residue" description="Phosphoserine" evidence="13">
    <location>
        <position position="209"/>
    </location>
</feature>
<feature type="modified residue" description="Phosphoserine" evidence="13">
    <location>
        <position position="212"/>
    </location>
</feature>
<feature type="modified residue" description="Phosphoserine" evidence="13">
    <location>
        <position position="249"/>
    </location>
</feature>
<feature type="modified residue" description="Phosphoserine" evidence="2">
    <location>
        <position position="282"/>
    </location>
</feature>
<feature type="modified residue" description="Phosphoserine" evidence="3">
    <location>
        <position position="508"/>
    </location>
</feature>
<feature type="modified residue" description="Phosphothreonine" evidence="13">
    <location>
        <position position="572"/>
    </location>
</feature>
<feature type="modified residue" description="Phosphoserine" evidence="13">
    <location>
        <position position="575"/>
    </location>
</feature>
<feature type="modified residue" description="Phosphoserine" evidence="13">
    <location>
        <position position="576"/>
    </location>
</feature>
<feature type="modified residue" description="Phosphoserine" evidence="3">
    <location>
        <position position="652"/>
    </location>
</feature>
<feature type="splice variant" id="VSP_023771" description="In isoform 2." evidence="9 10 11">
    <location>
        <begin position="49"/>
        <end position="751"/>
    </location>
</feature>
<feature type="sequence conflict" description="In Ref. 1; AAP47276 and 2; AAL35353/AAL35354." evidence="12" ref="1 2">
    <location>
        <position position="26"/>
    </location>
</feature>